<protein>
    <recommendedName>
        <fullName>Respiratory growth induced protein 1</fullName>
    </recommendedName>
</protein>
<proteinExistence type="inferred from homology"/>
<comment type="function">
    <text evidence="1">Involved in the control of energetic metabolism and significantly contribute to cell fitness, especially under respiratory growth conditions.</text>
</comment>
<comment type="subcellular location">
    <subcellularLocation>
        <location evidence="1">Cell membrane</location>
        <topology evidence="1">Peripheral membrane protein</topology>
    </subcellularLocation>
</comment>
<comment type="similarity">
    <text evidence="2">Belongs to the RGI1 family.</text>
</comment>
<gene>
    <name type="primary">RGI1</name>
    <name type="ordered locus">KLLA0C08063g</name>
</gene>
<dbReference type="EMBL" id="CR382123">
    <property type="protein sequence ID" value="CAH01410.1"/>
    <property type="molecule type" value="Genomic_DNA"/>
</dbReference>
<dbReference type="RefSeq" id="XP_452559.1">
    <property type="nucleotide sequence ID" value="XM_452559.1"/>
</dbReference>
<dbReference type="SMR" id="Q6CU30"/>
<dbReference type="FunCoup" id="Q6CU30">
    <property type="interactions" value="70"/>
</dbReference>
<dbReference type="STRING" id="284590.Q6CU30"/>
<dbReference type="PaxDb" id="284590-Q6CU30"/>
<dbReference type="KEGG" id="kla:KLLA0_C08063g"/>
<dbReference type="eggNOG" id="ENOG502RZ9F">
    <property type="taxonomic scope" value="Eukaryota"/>
</dbReference>
<dbReference type="HOGENOM" id="CLU_118207_0_0_1"/>
<dbReference type="InParanoid" id="Q6CU30"/>
<dbReference type="OMA" id="HLKYYPP"/>
<dbReference type="Proteomes" id="UP000000598">
    <property type="component" value="Chromosome C"/>
</dbReference>
<dbReference type="GO" id="GO:0005886">
    <property type="term" value="C:plasma membrane"/>
    <property type="evidence" value="ECO:0007669"/>
    <property type="project" value="UniProtKB-SubCell"/>
</dbReference>
<dbReference type="GO" id="GO:0006112">
    <property type="term" value="P:energy reserve metabolic process"/>
    <property type="evidence" value="ECO:0007669"/>
    <property type="project" value="InterPro"/>
</dbReference>
<dbReference type="Gene3D" id="3.40.1000.40">
    <property type="entry name" value="Respiratory growth induced protein 1"/>
    <property type="match status" value="1"/>
</dbReference>
<dbReference type="InterPro" id="IPR022554">
    <property type="entry name" value="RGI1"/>
</dbReference>
<dbReference type="InterPro" id="IPR038235">
    <property type="entry name" value="RGI1_sf"/>
</dbReference>
<dbReference type="Pfam" id="PF10843">
    <property type="entry name" value="RGI1"/>
    <property type="match status" value="1"/>
</dbReference>
<keyword id="KW-1003">Cell membrane</keyword>
<keyword id="KW-0472">Membrane</keyword>
<keyword id="KW-1185">Reference proteome</keyword>
<evidence type="ECO:0000250" key="1"/>
<evidence type="ECO:0000305" key="2"/>
<name>RGI1_KLULA</name>
<sequence length="163" mass="19211">MTKKDKGPKFANVTTKSGEVVKVFEDLNDFETFIKNETEDEEFDHVHCHLKYYPPFVLHESHEDPEKIKDSANSHSKKFVRHLHQHIEKHLLKDIKERIKLPDLKFKDKAKEESFEHIVWKYNDVTQYHGKDFEIHITVECHNDSAIVDVDYLTKPLTAAVEA</sequence>
<reference key="1">
    <citation type="journal article" date="2004" name="Nature">
        <title>Genome evolution in yeasts.</title>
        <authorList>
            <person name="Dujon B."/>
            <person name="Sherman D."/>
            <person name="Fischer G."/>
            <person name="Durrens P."/>
            <person name="Casaregola S."/>
            <person name="Lafontaine I."/>
            <person name="de Montigny J."/>
            <person name="Marck C."/>
            <person name="Neuveglise C."/>
            <person name="Talla E."/>
            <person name="Goffard N."/>
            <person name="Frangeul L."/>
            <person name="Aigle M."/>
            <person name="Anthouard V."/>
            <person name="Babour A."/>
            <person name="Barbe V."/>
            <person name="Barnay S."/>
            <person name="Blanchin S."/>
            <person name="Beckerich J.-M."/>
            <person name="Beyne E."/>
            <person name="Bleykasten C."/>
            <person name="Boisrame A."/>
            <person name="Boyer J."/>
            <person name="Cattolico L."/>
            <person name="Confanioleri F."/>
            <person name="de Daruvar A."/>
            <person name="Despons L."/>
            <person name="Fabre E."/>
            <person name="Fairhead C."/>
            <person name="Ferry-Dumazet H."/>
            <person name="Groppi A."/>
            <person name="Hantraye F."/>
            <person name="Hennequin C."/>
            <person name="Jauniaux N."/>
            <person name="Joyet P."/>
            <person name="Kachouri R."/>
            <person name="Kerrest A."/>
            <person name="Koszul R."/>
            <person name="Lemaire M."/>
            <person name="Lesur I."/>
            <person name="Ma L."/>
            <person name="Muller H."/>
            <person name="Nicaud J.-M."/>
            <person name="Nikolski M."/>
            <person name="Oztas S."/>
            <person name="Ozier-Kalogeropoulos O."/>
            <person name="Pellenz S."/>
            <person name="Potier S."/>
            <person name="Richard G.-F."/>
            <person name="Straub M.-L."/>
            <person name="Suleau A."/>
            <person name="Swennen D."/>
            <person name="Tekaia F."/>
            <person name="Wesolowski-Louvel M."/>
            <person name="Westhof E."/>
            <person name="Wirth B."/>
            <person name="Zeniou-Meyer M."/>
            <person name="Zivanovic Y."/>
            <person name="Bolotin-Fukuhara M."/>
            <person name="Thierry A."/>
            <person name="Bouchier C."/>
            <person name="Caudron B."/>
            <person name="Scarpelli C."/>
            <person name="Gaillardin C."/>
            <person name="Weissenbach J."/>
            <person name="Wincker P."/>
            <person name="Souciet J.-L."/>
        </authorList>
    </citation>
    <scope>NUCLEOTIDE SEQUENCE [LARGE SCALE GENOMIC DNA]</scope>
    <source>
        <strain>ATCC 8585 / CBS 2359 / DSM 70799 / NBRC 1267 / NRRL Y-1140 / WM37</strain>
    </source>
</reference>
<feature type="chain" id="PRO_0000402286" description="Respiratory growth induced protein 1">
    <location>
        <begin position="1"/>
        <end position="163"/>
    </location>
</feature>
<accession>Q6CU30</accession>
<organism>
    <name type="scientific">Kluyveromyces lactis (strain ATCC 8585 / CBS 2359 / DSM 70799 / NBRC 1267 / NRRL Y-1140 / WM37)</name>
    <name type="common">Yeast</name>
    <name type="synonym">Candida sphaerica</name>
    <dbReference type="NCBI Taxonomy" id="284590"/>
    <lineage>
        <taxon>Eukaryota</taxon>
        <taxon>Fungi</taxon>
        <taxon>Dikarya</taxon>
        <taxon>Ascomycota</taxon>
        <taxon>Saccharomycotina</taxon>
        <taxon>Saccharomycetes</taxon>
        <taxon>Saccharomycetales</taxon>
        <taxon>Saccharomycetaceae</taxon>
        <taxon>Kluyveromyces</taxon>
    </lineage>
</organism>